<comment type="function">
    <text evidence="1">Catalyzes the reversible interconversion of serine and glycine with tetrahydrofolate (THF) serving as the one-carbon carrier. This reaction serves as the major source of one-carbon groups required for the biosynthesis of purines, thymidylate, methionine, and other important biomolecules. Also exhibits THF-independent aldolase activity toward beta-hydroxyamino acids, producing glycine and aldehydes, via a retro-aldol mechanism.</text>
</comment>
<comment type="catalytic activity">
    <reaction evidence="1">
        <text>(6R)-5,10-methylene-5,6,7,8-tetrahydrofolate + glycine + H2O = (6S)-5,6,7,8-tetrahydrofolate + L-serine</text>
        <dbReference type="Rhea" id="RHEA:15481"/>
        <dbReference type="ChEBI" id="CHEBI:15377"/>
        <dbReference type="ChEBI" id="CHEBI:15636"/>
        <dbReference type="ChEBI" id="CHEBI:33384"/>
        <dbReference type="ChEBI" id="CHEBI:57305"/>
        <dbReference type="ChEBI" id="CHEBI:57453"/>
        <dbReference type="EC" id="2.1.2.1"/>
    </reaction>
</comment>
<comment type="cofactor">
    <cofactor evidence="1">
        <name>pyridoxal 5'-phosphate</name>
        <dbReference type="ChEBI" id="CHEBI:597326"/>
    </cofactor>
</comment>
<comment type="pathway">
    <text evidence="1">One-carbon metabolism; tetrahydrofolate interconversion.</text>
</comment>
<comment type="pathway">
    <text evidence="1">Amino-acid biosynthesis; glycine biosynthesis; glycine from L-serine: step 1/1.</text>
</comment>
<comment type="subunit">
    <text evidence="1">Homodimer.</text>
</comment>
<comment type="subcellular location">
    <subcellularLocation>
        <location evidence="1">Cytoplasm</location>
    </subcellularLocation>
</comment>
<comment type="similarity">
    <text evidence="1">Belongs to the SHMT family.</text>
</comment>
<proteinExistence type="inferred from homology"/>
<sequence length="417" mass="44943">MFANISLSEFDPELAKSIEAEDARQEAHIELIASENYCSPAVMEAQGSKLTNKYAEGYPGKRYYGGCEYVDVIEQLAIDRAKALFGADYANVQPHAGSQANSAVYLALLNAGDTVLGMSLAHGGHLTHGAKVNFSGKTYNAVQYGLNPETGEIDYDEVERLAIEHKPRMIVAGFSAYSRIVDWQRFRDIADKVGAYLFVDMAHVAGLVAAGVYPSPVQIADVTTTTTHKTLRGPRSGLILAKANEEIEKKLQSAVFPGNQGGPLVHAIAAKAVCFKEAMAPEYKAYQQQVVKNAQAMAEVLIARGYDIVSGGTDNHLFLLSLIKQDVTGKEADAWLGNANITVNKNAVPNDPRSPFVTSGIRIGTPAVTTRGFGEAEVRDLASWIADVLDSKGDEKVIADVKAKVEAVCAKFPVYEN</sequence>
<organism>
    <name type="scientific">Acinetobacter baylyi (strain ATCC 33305 / BD413 / ADP1)</name>
    <dbReference type="NCBI Taxonomy" id="62977"/>
    <lineage>
        <taxon>Bacteria</taxon>
        <taxon>Pseudomonadati</taxon>
        <taxon>Pseudomonadota</taxon>
        <taxon>Gammaproteobacteria</taxon>
        <taxon>Moraxellales</taxon>
        <taxon>Moraxellaceae</taxon>
        <taxon>Acinetobacter</taxon>
    </lineage>
</organism>
<feature type="chain" id="PRO_0000113517" description="Serine hydroxymethyltransferase">
    <location>
        <begin position="1"/>
        <end position="417"/>
    </location>
</feature>
<feature type="binding site" evidence="1">
    <location>
        <position position="120"/>
    </location>
    <ligand>
        <name>(6S)-5,6,7,8-tetrahydrofolate</name>
        <dbReference type="ChEBI" id="CHEBI:57453"/>
    </ligand>
</feature>
<feature type="binding site" evidence="1">
    <location>
        <begin position="124"/>
        <end position="126"/>
    </location>
    <ligand>
        <name>(6S)-5,6,7,8-tetrahydrofolate</name>
        <dbReference type="ChEBI" id="CHEBI:57453"/>
    </ligand>
</feature>
<feature type="binding site" evidence="1">
    <location>
        <begin position="354"/>
        <end position="356"/>
    </location>
    <ligand>
        <name>(6S)-5,6,7,8-tetrahydrofolate</name>
        <dbReference type="ChEBI" id="CHEBI:57453"/>
    </ligand>
</feature>
<feature type="site" description="Plays an important role in substrate specificity" evidence="1">
    <location>
        <position position="228"/>
    </location>
</feature>
<feature type="modified residue" description="N6-(pyridoxal phosphate)lysine" evidence="1">
    <location>
        <position position="229"/>
    </location>
</feature>
<dbReference type="EC" id="2.1.2.1" evidence="1"/>
<dbReference type="EMBL" id="CR543861">
    <property type="protein sequence ID" value="CAG69047.1"/>
    <property type="molecule type" value="Genomic_DNA"/>
</dbReference>
<dbReference type="RefSeq" id="WP_004927900.1">
    <property type="nucleotide sequence ID" value="NC_005966.1"/>
</dbReference>
<dbReference type="SMR" id="Q6FA66"/>
<dbReference type="STRING" id="202950.GCA_001485005_00142"/>
<dbReference type="GeneID" id="45234583"/>
<dbReference type="KEGG" id="aci:ACIAD2255"/>
<dbReference type="eggNOG" id="COG0112">
    <property type="taxonomic scope" value="Bacteria"/>
</dbReference>
<dbReference type="HOGENOM" id="CLU_022477_2_1_6"/>
<dbReference type="OrthoDB" id="9803846at2"/>
<dbReference type="BioCyc" id="ASP62977:ACIAD_RS10325-MONOMER"/>
<dbReference type="UniPathway" id="UPA00193"/>
<dbReference type="UniPathway" id="UPA00288">
    <property type="reaction ID" value="UER01023"/>
</dbReference>
<dbReference type="Proteomes" id="UP000000430">
    <property type="component" value="Chromosome"/>
</dbReference>
<dbReference type="GO" id="GO:0005829">
    <property type="term" value="C:cytosol"/>
    <property type="evidence" value="ECO:0007669"/>
    <property type="project" value="TreeGrafter"/>
</dbReference>
<dbReference type="GO" id="GO:0004372">
    <property type="term" value="F:glycine hydroxymethyltransferase activity"/>
    <property type="evidence" value="ECO:0007669"/>
    <property type="project" value="UniProtKB-UniRule"/>
</dbReference>
<dbReference type="GO" id="GO:0030170">
    <property type="term" value="F:pyridoxal phosphate binding"/>
    <property type="evidence" value="ECO:0007669"/>
    <property type="project" value="UniProtKB-UniRule"/>
</dbReference>
<dbReference type="GO" id="GO:0019264">
    <property type="term" value="P:glycine biosynthetic process from serine"/>
    <property type="evidence" value="ECO:0007669"/>
    <property type="project" value="UniProtKB-UniRule"/>
</dbReference>
<dbReference type="GO" id="GO:0035999">
    <property type="term" value="P:tetrahydrofolate interconversion"/>
    <property type="evidence" value="ECO:0007669"/>
    <property type="project" value="UniProtKB-UniRule"/>
</dbReference>
<dbReference type="CDD" id="cd00378">
    <property type="entry name" value="SHMT"/>
    <property type="match status" value="1"/>
</dbReference>
<dbReference type="FunFam" id="3.40.640.10:FF:000001">
    <property type="entry name" value="Serine hydroxymethyltransferase"/>
    <property type="match status" value="1"/>
</dbReference>
<dbReference type="FunFam" id="3.90.1150.10:FF:000003">
    <property type="entry name" value="Serine hydroxymethyltransferase"/>
    <property type="match status" value="1"/>
</dbReference>
<dbReference type="Gene3D" id="3.90.1150.10">
    <property type="entry name" value="Aspartate Aminotransferase, domain 1"/>
    <property type="match status" value="1"/>
</dbReference>
<dbReference type="Gene3D" id="3.40.640.10">
    <property type="entry name" value="Type I PLP-dependent aspartate aminotransferase-like (Major domain)"/>
    <property type="match status" value="1"/>
</dbReference>
<dbReference type="HAMAP" id="MF_00051">
    <property type="entry name" value="SHMT"/>
    <property type="match status" value="1"/>
</dbReference>
<dbReference type="InterPro" id="IPR015424">
    <property type="entry name" value="PyrdxlP-dep_Trfase"/>
</dbReference>
<dbReference type="InterPro" id="IPR015421">
    <property type="entry name" value="PyrdxlP-dep_Trfase_major"/>
</dbReference>
<dbReference type="InterPro" id="IPR015422">
    <property type="entry name" value="PyrdxlP-dep_Trfase_small"/>
</dbReference>
<dbReference type="InterPro" id="IPR001085">
    <property type="entry name" value="Ser_HO-MeTrfase"/>
</dbReference>
<dbReference type="InterPro" id="IPR049943">
    <property type="entry name" value="Ser_HO-MeTrfase-like"/>
</dbReference>
<dbReference type="InterPro" id="IPR019798">
    <property type="entry name" value="Ser_HO-MeTrfase_PLP_BS"/>
</dbReference>
<dbReference type="InterPro" id="IPR039429">
    <property type="entry name" value="SHMT-like_dom"/>
</dbReference>
<dbReference type="NCBIfam" id="NF000586">
    <property type="entry name" value="PRK00011.1"/>
    <property type="match status" value="1"/>
</dbReference>
<dbReference type="PANTHER" id="PTHR11680">
    <property type="entry name" value="SERINE HYDROXYMETHYLTRANSFERASE"/>
    <property type="match status" value="1"/>
</dbReference>
<dbReference type="PANTHER" id="PTHR11680:SF50">
    <property type="entry name" value="SERINE HYDROXYMETHYLTRANSFERASE"/>
    <property type="match status" value="1"/>
</dbReference>
<dbReference type="Pfam" id="PF00464">
    <property type="entry name" value="SHMT"/>
    <property type="match status" value="1"/>
</dbReference>
<dbReference type="PIRSF" id="PIRSF000412">
    <property type="entry name" value="SHMT"/>
    <property type="match status" value="1"/>
</dbReference>
<dbReference type="SUPFAM" id="SSF53383">
    <property type="entry name" value="PLP-dependent transferases"/>
    <property type="match status" value="1"/>
</dbReference>
<dbReference type="PROSITE" id="PS00096">
    <property type="entry name" value="SHMT"/>
    <property type="match status" value="1"/>
</dbReference>
<protein>
    <recommendedName>
        <fullName evidence="1">Serine hydroxymethyltransferase</fullName>
        <shortName evidence="1">SHMT</shortName>
        <shortName evidence="1">Serine methylase</shortName>
        <ecNumber evidence="1">2.1.2.1</ecNumber>
    </recommendedName>
</protein>
<reference key="1">
    <citation type="journal article" date="2004" name="Nucleic Acids Res.">
        <title>Unique features revealed by the genome sequence of Acinetobacter sp. ADP1, a versatile and naturally transformation competent bacterium.</title>
        <authorList>
            <person name="Barbe V."/>
            <person name="Vallenet D."/>
            <person name="Fonknechten N."/>
            <person name="Kreimeyer A."/>
            <person name="Oztas S."/>
            <person name="Labarre L."/>
            <person name="Cruveiller S."/>
            <person name="Robert C."/>
            <person name="Duprat S."/>
            <person name="Wincker P."/>
            <person name="Ornston L.N."/>
            <person name="Weissenbach J."/>
            <person name="Marliere P."/>
            <person name="Cohen G.N."/>
            <person name="Medigue C."/>
        </authorList>
    </citation>
    <scope>NUCLEOTIDE SEQUENCE [LARGE SCALE GENOMIC DNA]</scope>
    <source>
        <strain>ATCC 33305 / BD413 / ADP1</strain>
    </source>
</reference>
<accession>Q6FA66</accession>
<gene>
    <name evidence="1" type="primary">glyA</name>
    <name type="ordered locus">ACIAD2255</name>
</gene>
<evidence type="ECO:0000255" key="1">
    <source>
        <dbReference type="HAMAP-Rule" id="MF_00051"/>
    </source>
</evidence>
<keyword id="KW-0028">Amino-acid biosynthesis</keyword>
<keyword id="KW-0963">Cytoplasm</keyword>
<keyword id="KW-0554">One-carbon metabolism</keyword>
<keyword id="KW-0663">Pyridoxal phosphate</keyword>
<keyword id="KW-0808">Transferase</keyword>
<name>GLYA_ACIAD</name>